<comment type="function">
    <text evidence="8 9 10 11 13 14 15">Serine hydrolase that hydrolyzes arachidonic acid-esterified diacylglycerols (DAGs) to produce the principal endocannabinoid (eCB), 2-arachidonoylglycerol (2-AG) (PubMed:17584991, PubMed:23103940). Preferentially hydrolyzes sn-1 fatty acids from diacylglycerols (DAG) that contain arachidonic acid (AA) esterified at the sn-2 position to biosynthesize 2-AG. Has negligible activity against other lipids including monoacylglycerols and phospholipids (PubMed:17584991). Plays a key role in regulating 2-AG signaling in the central nervous system (CNS) (PubMed:20147530, PubMed:20159446, PubMed:25466252, PubMed:26668358, PubMed:26779719). Controls the activity of 2-AG as a retrograde messenger at neuronal synapses (PubMed:20147530, PubMed:20159446, PubMed:26668358). Supports axonal growth during development and adult neurogenesis (PubMed:20147530). Plays a role for eCB signaling in the physiological regulation of anxiety and depressive behaviors (PubMed:25466252). Also regulates neuroinflammatory responses in the brain, in particular, LPS-induced microglial activation (PubMed:26779719).</text>
</comment>
<comment type="catalytic activity">
    <reaction evidence="8">
        <text>a 1,2-diacyl-sn-glycerol + H2O = a 2-acylglycerol + a fatty acid + H(+)</text>
        <dbReference type="Rhea" id="RHEA:33275"/>
        <dbReference type="ChEBI" id="CHEBI:15377"/>
        <dbReference type="ChEBI" id="CHEBI:15378"/>
        <dbReference type="ChEBI" id="CHEBI:17389"/>
        <dbReference type="ChEBI" id="CHEBI:17815"/>
        <dbReference type="ChEBI" id="CHEBI:28868"/>
        <dbReference type="EC" id="3.1.1.116"/>
    </reaction>
    <physiologicalReaction direction="left-to-right" evidence="19">
        <dbReference type="Rhea" id="RHEA:33276"/>
    </physiologicalReaction>
</comment>
<comment type="catalytic activity">
    <reaction evidence="8 11">
        <text>1-octadecanoyl-2-(5Z,8Z,11Z,14Z-eicosatetraenoyl)-sn-glycerol + H2O = 2-(5Z,8Z,11Z,14Z-eicosatetraenoyl)-glycerol + octadecanoate + H(+)</text>
        <dbReference type="Rhea" id="RHEA:38507"/>
        <dbReference type="ChEBI" id="CHEBI:15377"/>
        <dbReference type="ChEBI" id="CHEBI:15378"/>
        <dbReference type="ChEBI" id="CHEBI:25629"/>
        <dbReference type="ChEBI" id="CHEBI:52392"/>
        <dbReference type="ChEBI" id="CHEBI:75728"/>
    </reaction>
    <physiologicalReaction direction="left-to-right" evidence="19">
        <dbReference type="Rhea" id="RHEA:38508"/>
    </physiologicalReaction>
</comment>
<comment type="catalytic activity">
    <reaction evidence="8">
        <text>1,2-di-(9Z-octadecenoyl)-sn-glycerol + H2O = 2-(9Z-octadecenoyl)-glycerol + (9Z)-octadecenoate + H(+)</text>
        <dbReference type="Rhea" id="RHEA:38511"/>
        <dbReference type="ChEBI" id="CHEBI:15377"/>
        <dbReference type="ChEBI" id="CHEBI:15378"/>
        <dbReference type="ChEBI" id="CHEBI:30823"/>
        <dbReference type="ChEBI" id="CHEBI:52333"/>
        <dbReference type="ChEBI" id="CHEBI:73990"/>
    </reaction>
    <physiologicalReaction direction="left-to-right" evidence="19">
        <dbReference type="Rhea" id="RHEA:38512"/>
    </physiologicalReaction>
</comment>
<comment type="catalytic activity">
    <reaction evidence="2">
        <text>1-(9Z-octadecenoyl)-2-(5Z,8Z,11Z,14Z-eicosatetraenoyl)-sn-glycerol + H2O = 2-(5Z,8Z,11Z,14Z-eicosatetraenoyl)-glycerol + (9Z)-octadecenoate + H(+)</text>
        <dbReference type="Rhea" id="RHEA:38515"/>
        <dbReference type="ChEBI" id="CHEBI:15377"/>
        <dbReference type="ChEBI" id="CHEBI:15378"/>
        <dbReference type="ChEBI" id="CHEBI:30823"/>
        <dbReference type="ChEBI" id="CHEBI:52392"/>
        <dbReference type="ChEBI" id="CHEBI:75449"/>
    </reaction>
    <physiologicalReaction direction="left-to-right" evidence="2">
        <dbReference type="Rhea" id="RHEA:38516"/>
    </physiologicalReaction>
</comment>
<comment type="catalytic activity">
    <reaction evidence="2">
        <text>1-(9Z-octadecenoyl)-2-octadecanoyl-sn-glycerol + H2O = 2-octadecanoylglycerol + (9Z)-octadecenoate + H(+)</text>
        <dbReference type="Rhea" id="RHEA:38519"/>
        <dbReference type="ChEBI" id="CHEBI:15377"/>
        <dbReference type="ChEBI" id="CHEBI:15378"/>
        <dbReference type="ChEBI" id="CHEBI:30823"/>
        <dbReference type="ChEBI" id="CHEBI:75448"/>
        <dbReference type="ChEBI" id="CHEBI:75456"/>
    </reaction>
    <physiologicalReaction direction="left-to-right" evidence="2">
        <dbReference type="Rhea" id="RHEA:38520"/>
    </physiologicalReaction>
</comment>
<comment type="catalytic activity">
    <reaction evidence="2">
        <text>1-(9Z-octadecenoyl)-2-(9Z,12Z-octadecadienoyl)-sn-glycerol + H2O = 2-(9Z,12Z-octadecadienoyl)-glycerol + (9Z)-octadecenoate + H(+)</text>
        <dbReference type="Rhea" id="RHEA:38523"/>
        <dbReference type="ChEBI" id="CHEBI:15377"/>
        <dbReference type="ChEBI" id="CHEBI:15378"/>
        <dbReference type="ChEBI" id="CHEBI:30823"/>
        <dbReference type="ChEBI" id="CHEBI:75450"/>
        <dbReference type="ChEBI" id="CHEBI:75457"/>
    </reaction>
    <physiologicalReaction direction="left-to-right" evidence="2">
        <dbReference type="Rhea" id="RHEA:38524"/>
    </physiologicalReaction>
</comment>
<comment type="catalytic activity">
    <reaction evidence="2">
        <text>1-(9Z-octadecenoyl)-2-O-(5Z,8Z,11Z,14Z-eicosatetraenyl)-sn-glycerol + H2O = 2-O-(5Z,8Z,11Z,14Z)-eicosatetraenylglycerol + (9Z)-octadecenoate + H(+)</text>
        <dbReference type="Rhea" id="RHEA:38527"/>
        <dbReference type="ChEBI" id="CHEBI:15377"/>
        <dbReference type="ChEBI" id="CHEBI:15378"/>
        <dbReference type="ChEBI" id="CHEBI:30823"/>
        <dbReference type="ChEBI" id="CHEBI:75913"/>
        <dbReference type="ChEBI" id="CHEBI:75914"/>
    </reaction>
    <physiologicalReaction direction="left-to-right" evidence="2">
        <dbReference type="Rhea" id="RHEA:38528"/>
    </physiologicalReaction>
</comment>
<comment type="cofactor">
    <cofactor evidence="2">
        <name>Ca(2+)</name>
        <dbReference type="ChEBI" id="CHEBI:29108"/>
    </cofactor>
</comment>
<comment type="activity regulation">
    <text evidence="2 11 14">Inhibited by 1,2,3-triazole urea covalent inhibitor KT172, DH376 and DO34 (PubMed:23103940, PubMed:26668358). Inhibited by p-hydroxy-mercuri-benzoate and HgCl(2), but not to PMSF. Also inhibited by RHC80267. Diacylglycerol lipase activity is inhibited by the phosphorylation of Ser-784 and Ser-810 by CAMK2A (By similarity).</text>
</comment>
<comment type="subunit">
    <text evidence="8 12">Interacts (via C-terminal) with CAMK2A; leading to the phosphorylation and inhibition of DAGLA enzymatic activity (PubMed:23502535). Interacts (via PPXXF motif) with HOMER1 and HOMER2; this interaction is required for DAGLA membrane localization (PubMed:17584991).</text>
</comment>
<comment type="subcellular location">
    <subcellularLocation>
        <location evidence="8">Cell membrane</location>
        <topology evidence="3">Multi-pass membrane protein</topology>
    </subcellularLocation>
    <subcellularLocation>
        <location evidence="7">Cell projection</location>
        <location evidence="7">Dendritic spine membrane</location>
        <topology evidence="3">Multi-pass membrane protein</topology>
    </subcellularLocation>
    <subcellularLocation>
        <location evidence="2">Postsynaptic density membrane</location>
        <topology evidence="3">Multi-pass membrane protein</topology>
    </subcellularLocation>
    <subcellularLocation>
        <location evidence="2">Early endosome membrane</location>
        <topology evidence="3">Multi-pass membrane protein</topology>
    </subcellularLocation>
    <text evidence="2">Cycles between the cell surface and an intracellular endosomal compartment. Internalized by early endosomes via a clathrin-independent pathway before transport back to the postsynaptic membrane surface in a PKC-dependent manner.</text>
</comment>
<comment type="tissue specificity">
    <text evidence="6 7">Highly expressed by principal cells in the hippocampus. In embryonic brains, it is present in axonal tracts, while in adults it localizes to dendritic fields, correlating with the developmental change in requirement for 2-AG synthesis from the pre- to the postsynaptic compartment. Concentrated in heads of dendritic spines throughout the hippocampal formation. Highly compartmentalized into a wide perisynaptic annulus around the postsynaptic density of axospinous contacts but not intrasynaptically (at protein level).</text>
</comment>
<comment type="PTM">
    <text evidence="2">Phosphorylated at Ser-784 and Ser-810 by CAMK2A; phosphorylation by CAMK2A inhibits diacylglycerol lipase activity.</text>
</comment>
<comment type="disruption phenotype">
    <text evidence="9 10 13 15">Deficient mice are viable, fertile and display normal physiological behaviors (PubMed:20147530, PubMed:20159446). Deficient mice show 80-90% reductions in brain 2-AG as well as the downstream product arachidonic acid (AA), in particular in neurons and astrocytes (PubMed:20147530, PubMed:20159446, PubMed:25466252, PubMed:26779719). The endocannabinoid-mediated retrograde synaptic suppression of neurotransmitter release is absent in the cerebellum, hippocampus, and striatum of knockout mice (PubMed:20147530, PubMed:20159446). In addition, reduction in adult neurogenesis is observed in deficient mice in both the hippocampus and the subventricular zone (PubMed:20147530). DAGLA deletion increases anxiety-like and depressive behaviors (PubMed:25466252). Reduction in LPS-stimulated neuroinflammation is also observed in knockout mice (PubMed:26779719).</text>
</comment>
<comment type="similarity">
    <text evidence="18">Belongs to the AB hydrolase superfamily. Lipase family.</text>
</comment>
<feature type="chain" id="PRO_0000248348" description="Diacylglycerol lipase-alpha">
    <location>
        <begin position="1"/>
        <end position="1044"/>
    </location>
</feature>
<feature type="topological domain" description="Cytoplasmic" evidence="3">
    <location>
        <begin position="1"/>
        <end position="22"/>
    </location>
</feature>
<feature type="transmembrane region" description="Helical" evidence="3">
    <location>
        <begin position="23"/>
        <end position="43"/>
    </location>
</feature>
<feature type="topological domain" description="Extracellular" evidence="3">
    <location>
        <begin position="44"/>
        <end position="60"/>
    </location>
</feature>
<feature type="transmembrane region" description="Helical" evidence="3">
    <location>
        <begin position="61"/>
        <end position="81"/>
    </location>
</feature>
<feature type="topological domain" description="Cytoplasmic" evidence="3">
    <location>
        <begin position="82"/>
        <end position="101"/>
    </location>
</feature>
<feature type="transmembrane region" description="Helical" evidence="3">
    <location>
        <begin position="102"/>
        <end position="122"/>
    </location>
</feature>
<feature type="topological domain" description="Extracellular" evidence="3">
    <location>
        <begin position="123"/>
        <end position="136"/>
    </location>
</feature>
<feature type="transmembrane region" description="Helical" evidence="3">
    <location>
        <begin position="137"/>
        <end position="157"/>
    </location>
</feature>
<feature type="topological domain" description="Cytoplasmic" evidence="3">
    <location>
        <begin position="158"/>
        <end position="1044"/>
    </location>
</feature>
<feature type="region of interest" description="Disordered" evidence="5">
    <location>
        <begin position="848"/>
        <end position="897"/>
    </location>
</feature>
<feature type="region of interest" description="Disordered" evidence="5">
    <location>
        <begin position="1013"/>
        <end position="1044"/>
    </location>
</feature>
<feature type="active site" description="Charge relay system" evidence="4">
    <location>
        <position position="472"/>
    </location>
</feature>
<feature type="active site" description="Charge relay system" evidence="4">
    <location>
        <position position="524"/>
    </location>
</feature>
<feature type="modified residue" description="Phosphoserine" evidence="1">
    <location>
        <position position="728"/>
    </location>
</feature>
<feature type="modified residue" description="Phosphoserine" evidence="21">
    <location>
        <position position="730"/>
    </location>
</feature>
<feature type="modified residue" description="Phosphoserine" evidence="20">
    <location>
        <position position="733"/>
    </location>
</feature>
<feature type="modified residue" description="Phosphoserine" evidence="20 21">
    <location>
        <position position="744"/>
    </location>
</feature>
<feature type="modified residue" description="Phosphoserine" evidence="1">
    <location>
        <position position="784"/>
    </location>
</feature>
<feature type="modified residue" description="Phosphoserine" evidence="21">
    <location>
        <position position="786"/>
    </location>
</feature>
<feature type="modified residue" description="Phosphoserine" evidence="1">
    <location>
        <position position="808"/>
    </location>
</feature>
<feature type="modified residue" description="Phosphoserine" evidence="2">
    <location>
        <position position="810"/>
    </location>
</feature>
<feature type="modified residue" description="Phosphoserine" evidence="1">
    <location>
        <position position="835"/>
    </location>
</feature>
<feature type="modified residue" description="Phosphoserine" evidence="1">
    <location>
        <position position="849"/>
    </location>
</feature>
<feature type="modified residue" description="Phosphoserine" evidence="21">
    <location>
        <position position="954"/>
    </location>
</feature>
<feature type="modified residue" description="Phosphothreonine" evidence="21">
    <location>
        <position position="1025"/>
    </location>
</feature>
<feature type="glycosylation site" description="N-linked (GlcNAc...) asparagine" evidence="3">
    <location>
        <position position="133"/>
    </location>
</feature>
<feature type="mutagenesis site" description="Abolishes interaction with HOMER1. Does not affect enzymatic activity. Fails to associate with the plasma membrane." evidence="8">
    <original>P</original>
    <variation>C</variation>
    <location>
        <position position="975"/>
    </location>
</feature>
<feature type="mutagenesis site" description="Abolishes interaction with HOMER1." evidence="8">
    <original>F</original>
    <variation>R</variation>
    <location>
        <position position="978"/>
    </location>
</feature>
<feature type="sequence conflict" description="In Ref. 1; AAQ17118." evidence="18" ref="1">
    <original>A</original>
    <variation>P</variation>
    <location>
        <position position="191"/>
    </location>
</feature>
<feature type="sequence conflict" description="In Ref. 1; AAQ17118." evidence="18" ref="1">
    <original>P</original>
    <variation>S</variation>
    <location>
        <position position="830"/>
    </location>
</feature>
<feature type="sequence conflict" description="In Ref. 1; AAQ17118." evidence="18" ref="1">
    <original>T</original>
    <variation>S</variation>
    <location>
        <position position="945"/>
    </location>
</feature>
<dbReference type="EC" id="3.1.1.116" evidence="8 11"/>
<dbReference type="EMBL" id="AY275376">
    <property type="protein sequence ID" value="AAQ17118.1"/>
    <property type="molecule type" value="mRNA"/>
</dbReference>
<dbReference type="EMBL" id="BC148308">
    <property type="protein sequence ID" value="AAI48309.1"/>
    <property type="molecule type" value="mRNA"/>
</dbReference>
<dbReference type="EMBL" id="AK129183">
    <property type="protein sequence ID" value="BAC97993.1"/>
    <property type="molecule type" value="mRNA"/>
</dbReference>
<dbReference type="CCDS" id="CCDS29574.1"/>
<dbReference type="RefSeq" id="NP_932782.2">
    <property type="nucleotide sequence ID" value="NM_198114.2"/>
</dbReference>
<dbReference type="RefSeq" id="XP_006527177.1">
    <property type="nucleotide sequence ID" value="XM_006527114.3"/>
</dbReference>
<dbReference type="RefSeq" id="XP_017173702.1">
    <property type="nucleotide sequence ID" value="XM_017318213.2"/>
</dbReference>
<dbReference type="RefSeq" id="XP_036017498.1">
    <property type="nucleotide sequence ID" value="XM_036161605.1"/>
</dbReference>
<dbReference type="SMR" id="Q6WQJ1"/>
<dbReference type="BioGRID" id="234600">
    <property type="interactions" value="3"/>
</dbReference>
<dbReference type="FunCoup" id="Q6WQJ1">
    <property type="interactions" value="746"/>
</dbReference>
<dbReference type="IntAct" id="Q6WQJ1">
    <property type="interactions" value="1"/>
</dbReference>
<dbReference type="MINT" id="Q6WQJ1"/>
<dbReference type="STRING" id="10090.ENSMUSP00000046358"/>
<dbReference type="BindingDB" id="Q6WQJ1"/>
<dbReference type="ChEMBL" id="CHEMBL5180"/>
<dbReference type="DrugCentral" id="Q6WQJ1"/>
<dbReference type="ESTHER" id="mouse-q6wqj1">
    <property type="family name" value="Lipase_3"/>
</dbReference>
<dbReference type="GlyCosmos" id="Q6WQJ1">
    <property type="glycosylation" value="1 site, No reported glycans"/>
</dbReference>
<dbReference type="GlyGen" id="Q6WQJ1">
    <property type="glycosylation" value="2 sites, 1 O-linked glycan (1 site)"/>
</dbReference>
<dbReference type="iPTMnet" id="Q6WQJ1"/>
<dbReference type="PhosphoSitePlus" id="Q6WQJ1"/>
<dbReference type="SwissPalm" id="Q6WQJ1"/>
<dbReference type="jPOST" id="Q6WQJ1"/>
<dbReference type="PaxDb" id="10090-ENSMUSP00000046358"/>
<dbReference type="ProteomicsDB" id="279860"/>
<dbReference type="Antibodypedia" id="28260">
    <property type="antibodies" value="153 antibodies from 29 providers"/>
</dbReference>
<dbReference type="DNASU" id="269060"/>
<dbReference type="Ensembl" id="ENSMUST00000039327.11">
    <property type="protein sequence ID" value="ENSMUSP00000046358.5"/>
    <property type="gene ID" value="ENSMUSG00000035735.11"/>
</dbReference>
<dbReference type="GeneID" id="269060"/>
<dbReference type="KEGG" id="mmu:269060"/>
<dbReference type="UCSC" id="uc008gpm.1">
    <property type="organism name" value="mouse"/>
</dbReference>
<dbReference type="AGR" id="MGI:2677061"/>
<dbReference type="CTD" id="747"/>
<dbReference type="MGI" id="MGI:2677061">
    <property type="gene designation" value="Dagla"/>
</dbReference>
<dbReference type="VEuPathDB" id="HostDB:ENSMUSG00000035735"/>
<dbReference type="eggNOG" id="KOG2088">
    <property type="taxonomic scope" value="Eukaryota"/>
</dbReference>
<dbReference type="GeneTree" id="ENSGT00940000161192"/>
<dbReference type="HOGENOM" id="CLU_008300_1_0_1"/>
<dbReference type="InParanoid" id="Q6WQJ1"/>
<dbReference type="OMA" id="YCMVAPE"/>
<dbReference type="OrthoDB" id="438440at2759"/>
<dbReference type="PhylomeDB" id="Q6WQJ1"/>
<dbReference type="TreeFam" id="TF312928"/>
<dbReference type="BRENDA" id="3.1.1.116">
    <property type="organism ID" value="3474"/>
</dbReference>
<dbReference type="Reactome" id="R-MMU-426048">
    <property type="pathway name" value="Arachidonate production from DAG"/>
</dbReference>
<dbReference type="BioGRID-ORCS" id="269060">
    <property type="hits" value="3 hits in 79 CRISPR screens"/>
</dbReference>
<dbReference type="CD-CODE" id="CE726F99">
    <property type="entry name" value="Postsynaptic density"/>
</dbReference>
<dbReference type="ChiTaRS" id="Dagla">
    <property type="organism name" value="mouse"/>
</dbReference>
<dbReference type="PRO" id="PR:Q6WQJ1"/>
<dbReference type="Proteomes" id="UP000000589">
    <property type="component" value="Chromosome 19"/>
</dbReference>
<dbReference type="RNAct" id="Q6WQJ1">
    <property type="molecule type" value="protein"/>
</dbReference>
<dbReference type="Bgee" id="ENSMUSG00000035735">
    <property type="expression patterns" value="Expressed in medial dorsal nucleus of thalamus and 172 other cell types or tissues"/>
</dbReference>
<dbReference type="ExpressionAtlas" id="Q6WQJ1">
    <property type="expression patterns" value="baseline and differential"/>
</dbReference>
<dbReference type="GO" id="GO:0032591">
    <property type="term" value="C:dendritic spine membrane"/>
    <property type="evidence" value="ECO:0000314"/>
    <property type="project" value="UniProtKB"/>
</dbReference>
<dbReference type="GO" id="GO:0031901">
    <property type="term" value="C:early endosome membrane"/>
    <property type="evidence" value="ECO:0000250"/>
    <property type="project" value="UniProtKB"/>
</dbReference>
<dbReference type="GO" id="GO:0005886">
    <property type="term" value="C:plasma membrane"/>
    <property type="evidence" value="ECO:0000314"/>
    <property type="project" value="UniProtKB"/>
</dbReference>
<dbReference type="GO" id="GO:0098839">
    <property type="term" value="C:postsynaptic density membrane"/>
    <property type="evidence" value="ECO:0000250"/>
    <property type="project" value="UniProtKB"/>
</dbReference>
<dbReference type="GO" id="GO:0045211">
    <property type="term" value="C:postsynaptic membrane"/>
    <property type="evidence" value="ECO:0000314"/>
    <property type="project" value="SynGO"/>
</dbReference>
<dbReference type="GO" id="GO:0043196">
    <property type="term" value="C:varicosity"/>
    <property type="evidence" value="ECO:0000314"/>
    <property type="project" value="MGI"/>
</dbReference>
<dbReference type="GO" id="GO:0016787">
    <property type="term" value="F:hydrolase activity"/>
    <property type="evidence" value="ECO:0000315"/>
    <property type="project" value="UniProtKB"/>
</dbReference>
<dbReference type="GO" id="GO:0046872">
    <property type="term" value="F:metal ion binding"/>
    <property type="evidence" value="ECO:0007669"/>
    <property type="project" value="UniProtKB-KW"/>
</dbReference>
<dbReference type="GO" id="GO:0047372">
    <property type="term" value="F:monoacylglycerol lipase activity"/>
    <property type="evidence" value="ECO:0000315"/>
    <property type="project" value="MGI"/>
</dbReference>
<dbReference type="GO" id="GO:0019369">
    <property type="term" value="P:arachidonate metabolic process"/>
    <property type="evidence" value="ECO:0000315"/>
    <property type="project" value="UniProtKB"/>
</dbReference>
<dbReference type="GO" id="GO:1901696">
    <property type="term" value="P:cannabinoid biosynthetic process"/>
    <property type="evidence" value="ECO:0000315"/>
    <property type="project" value="MGI"/>
</dbReference>
<dbReference type="GO" id="GO:0046340">
    <property type="term" value="P:diacylglycerol catabolic process"/>
    <property type="evidence" value="ECO:0000250"/>
    <property type="project" value="UniProtKB"/>
</dbReference>
<dbReference type="GO" id="GO:0006640">
    <property type="term" value="P:monoacylglycerol biosynthetic process"/>
    <property type="evidence" value="ECO:0000315"/>
    <property type="project" value="MGI"/>
</dbReference>
<dbReference type="GO" id="GO:0007405">
    <property type="term" value="P:neuroblast proliferation"/>
    <property type="evidence" value="ECO:0000315"/>
    <property type="project" value="MGI"/>
</dbReference>
<dbReference type="GO" id="GO:0022008">
    <property type="term" value="P:neurogenesis"/>
    <property type="evidence" value="ECO:0000315"/>
    <property type="project" value="MGI"/>
</dbReference>
<dbReference type="GO" id="GO:0150077">
    <property type="term" value="P:regulation of neuroinflammatory response"/>
    <property type="evidence" value="ECO:0000315"/>
    <property type="project" value="UniProtKB"/>
</dbReference>
<dbReference type="GO" id="GO:0098921">
    <property type="term" value="P:retrograde trans-synaptic signaling by endocannabinoid"/>
    <property type="evidence" value="ECO:0000314"/>
    <property type="project" value="SynGO"/>
</dbReference>
<dbReference type="CDD" id="cd00519">
    <property type="entry name" value="Lipase_3"/>
    <property type="match status" value="1"/>
</dbReference>
<dbReference type="FunFam" id="3.40.50.1820:FF:000015">
    <property type="entry name" value="Sn1-specific diacylglycerol lipase alpha"/>
    <property type="match status" value="1"/>
</dbReference>
<dbReference type="Gene3D" id="3.40.50.1820">
    <property type="entry name" value="alpha/beta hydrolase"/>
    <property type="match status" value="1"/>
</dbReference>
<dbReference type="InterPro" id="IPR029058">
    <property type="entry name" value="AB_hydrolase_fold"/>
</dbReference>
<dbReference type="InterPro" id="IPR052214">
    <property type="entry name" value="DAG_Lipase-Related"/>
</dbReference>
<dbReference type="InterPro" id="IPR002921">
    <property type="entry name" value="Fungal_lipase-type"/>
</dbReference>
<dbReference type="PANTHER" id="PTHR45792">
    <property type="entry name" value="DIACYLGLYCEROL LIPASE HOMOLOG-RELATED"/>
    <property type="match status" value="1"/>
</dbReference>
<dbReference type="PANTHER" id="PTHR45792:SF8">
    <property type="entry name" value="DIACYLGLYCEROL LIPASE-ALPHA"/>
    <property type="match status" value="1"/>
</dbReference>
<dbReference type="Pfam" id="PF01764">
    <property type="entry name" value="Lipase_3"/>
    <property type="match status" value="1"/>
</dbReference>
<dbReference type="SUPFAM" id="SSF53474">
    <property type="entry name" value="alpha/beta-Hydrolases"/>
    <property type="match status" value="1"/>
</dbReference>
<dbReference type="PROSITE" id="PS00120">
    <property type="entry name" value="LIPASE_SER"/>
    <property type="match status" value="1"/>
</dbReference>
<sequence length="1044" mass="115375">MPGIVVFRRRWSVGSDDLVLPAIFLFLLHTTWFVILSVVLFGLVYNPHEACSLNLVDHGRGYLGILLSCMIAEMAIIWLSMRGGILYTEPRDSMQYVLYVRLAILVIEFIYAIVGIVWLTQYYTSCNDLTAKNVTLGMVVCNWVVILSVCITVLCVFDPTGRTFVKLRATKRRQRNLRTYNLRHRLEEGQATSWSRRLKVFLCCTRTKDSQSDAYSEIAYLFAEFFRDLDIVPSDIIAGLVLLRQRQRAKRNAVLDEANNDILAFLSGMPVTRNTKYLDLKNSHEMLRYKEVCYYMLFALAAYGWPMYLMRKPTCGLCQLARSCSCCLCPARPRFAPGVTIEEDNCCGCNAIAIRRHFLDENMTAVDIVYTSCHDAVYETPFYVAVDHDKKKVVISIRGTLSPKDALTDLTGDAERLPVEGHRGTWLGHKGMVLSAEYIKKKLEQEMVLSQAFGRDLGRGTKHYGLIVVGHSLGAGTAAILSFLLRPQYPTLKCFAYSPPGGLLSEDAMEYSKEFVTAVVLGKDLVPRIGLSQLEGFRRQLLDVLQRSTKPKWRIIVGATKCIPKSELPEDQVEVTTLASTRLWTHPSDLTIALSASTPLYPPGRIIHVVHNHPAEQCCCCEQEEPTYFAIWGDNKAFNEVIISPAMLHEHLPYVVMEGLNKVLENYNKGKTALLSAAKVMVSPTEVDLTPELIFQQQPLPTGPPLPTGLALELPATEHRNSSVRSKSQSEMSLEGFSEGRLLSPVAAASAARQDPVELLLLSTQERLAAELQSRRAPLATMESLSDTESLYSFDSRRSSGFRSIRGSPSLHAVLERDEGHLFYIDPAIPEENPSLSSRTELLAADSLSKHSQDTQPLEAALGSGGVTPERPPSATIEEEEAAGGSEGGGVAPRGELALHNGRLGDSPSPQVLEFAEFIDSLFNLDSKSSSFQDLYCMMVPESPTSDYTEGPKSPSQQEILLRAQFEPNLVPKPPRLFAGSAEPSSGISLSPSFPLSSSGELMDLTPTGLSSQECLATDKIRTSTPTGHGASPTKQDDLVISAR</sequence>
<accession>Q6WQJ1</accession>
<accession>A8WFL4</accession>
<accession>Q6ZQ76</accession>
<keyword id="KW-0106">Calcium</keyword>
<keyword id="KW-1003">Cell membrane</keyword>
<keyword id="KW-0966">Cell projection</keyword>
<keyword id="KW-0967">Endosome</keyword>
<keyword id="KW-0325">Glycoprotein</keyword>
<keyword id="KW-0378">Hydrolase</keyword>
<keyword id="KW-0442">Lipid degradation</keyword>
<keyword id="KW-0443">Lipid metabolism</keyword>
<keyword id="KW-0472">Membrane</keyword>
<keyword id="KW-0479">Metal-binding</keyword>
<keyword id="KW-0597">Phosphoprotein</keyword>
<keyword id="KW-0628">Postsynaptic cell membrane</keyword>
<keyword id="KW-1185">Reference proteome</keyword>
<keyword id="KW-0770">Synapse</keyword>
<keyword id="KW-0812">Transmembrane</keyword>
<keyword id="KW-1133">Transmembrane helix</keyword>
<reference key="1">
    <citation type="submission" date="2003-04" db="EMBL/GenBank/DDBJ databases">
        <title>NSDDR a novel tetra-spanning transmembrane protein with a unique integration pattern to the plasma membrane regulates the extension of the dendritic trees of Purkinje cells.</title>
        <authorList>
            <person name="Horiguchi S."/>
            <person name="Tashiro K."/>
            <person name="Takahashi J."/>
            <person name="Hashimoto N."/>
            <person name="Nakano I."/>
            <person name="Tsuchida Y."/>
            <person name="Hirai H."/>
            <person name="Honjo T."/>
        </authorList>
    </citation>
    <scope>NUCLEOTIDE SEQUENCE [MRNA]</scope>
    <source>
        <strain>C57BL/6J</strain>
    </source>
</reference>
<reference key="2">
    <citation type="journal article" date="2004" name="Genome Res.">
        <title>The status, quality, and expansion of the NIH full-length cDNA project: the Mammalian Gene Collection (MGC).</title>
        <authorList>
            <consortium name="The MGC Project Team"/>
        </authorList>
    </citation>
    <scope>NUCLEOTIDE SEQUENCE [LARGE SCALE MRNA]</scope>
</reference>
<reference key="3">
    <citation type="journal article" date="2003" name="DNA Res.">
        <title>Prediction of the coding sequences of mouse homologues of KIAA gene: III. The complete nucleotide sequences of 500 mouse KIAA-homologous cDNAs identified by screening of terminal sequences of cDNA clones randomly sampled from size-fractionated libraries.</title>
        <authorList>
            <person name="Okazaki N."/>
            <person name="Kikuno R."/>
            <person name="Ohara R."/>
            <person name="Inamoto S."/>
            <person name="Koseki H."/>
            <person name="Hiraoka S."/>
            <person name="Saga Y."/>
            <person name="Nagase T."/>
            <person name="Ohara O."/>
            <person name="Koga H."/>
        </authorList>
    </citation>
    <scope>NUCLEOTIDE SEQUENCE [LARGE SCALE MRNA] OF 894-1044</scope>
    <source>
        <tissue>Brain</tissue>
    </source>
</reference>
<reference key="4">
    <citation type="journal article" date="2003" name="J. Cell Biol.">
        <title>Cloning of the first sn1-DAG lipases points to the spatial and temporal regulation of endocannabinoid signaling in the brain.</title>
        <authorList>
            <person name="Bisogno T."/>
            <person name="Howell F."/>
            <person name="Williams G."/>
            <person name="Minassi A."/>
            <person name="Cascio M.G."/>
            <person name="Ligresti A."/>
            <person name="Matias I."/>
            <person name="Schiano-Moriello A."/>
            <person name="Paul P."/>
            <person name="Williams E.-J."/>
            <person name="Gangadharan U."/>
            <person name="Hobbs C."/>
            <person name="Di Marzo V."/>
            <person name="Doherty P."/>
        </authorList>
    </citation>
    <scope>TISSUE SPECIFICITY</scope>
</reference>
<reference key="5">
    <citation type="journal article" date="2006" name="J. Neurosci.">
        <title>Molecular composition of the endocannabinoid system at glutamatergic synapses.</title>
        <authorList>
            <person name="Katona I."/>
            <person name="Urban G.M."/>
            <person name="Wallace M."/>
            <person name="Ledent C."/>
            <person name="Jung K.M."/>
            <person name="Piomelli D."/>
            <person name="Mackie K."/>
            <person name="Freund T.F."/>
        </authorList>
    </citation>
    <scope>TISSUE SPECIFICITY</scope>
    <scope>SUBCELLULAR LOCATION</scope>
</reference>
<reference key="6">
    <citation type="journal article" date="2006" name="Mol. Cell. Proteomics">
        <title>Comprehensive identification of phosphorylation sites in postsynaptic density preparations.</title>
        <authorList>
            <person name="Trinidad J.C."/>
            <person name="Specht C.G."/>
            <person name="Thalhammer A."/>
            <person name="Schoepfer R."/>
            <person name="Burlingame A.L."/>
        </authorList>
    </citation>
    <scope>PHOSPHORYLATION [LARGE SCALE ANALYSIS] AT SER-733 AND SER-744</scope>
    <scope>IDENTIFICATION BY MASS SPECTROMETRY [LARGE SCALE ANALYSIS]</scope>
    <source>
        <tissue>Brain</tissue>
    </source>
</reference>
<reference key="7">
    <citation type="journal article" date="2007" name="Mol. Pharmacol.">
        <title>A key role for diacylglycerol lipase-alpha in metabotropic glutamate receptor-dependent endocannabinoid mobilization.</title>
        <authorList>
            <person name="Jung K.M."/>
            <person name="Astarita G."/>
            <person name="Zhu C."/>
            <person name="Wallace M."/>
            <person name="Mackie K."/>
            <person name="Piomelli D."/>
        </authorList>
    </citation>
    <scope>CATALYTIC ACTIVITY</scope>
    <scope>FUNCTION</scope>
    <scope>INTERACTION WITH HOMER1 AND HOMER2</scope>
    <scope>SUBCELLULAR LOCATION</scope>
    <scope>MUTAGENESIS OF PRO-975 AND PHE-978</scope>
</reference>
<reference key="8">
    <citation type="journal article" date="2010" name="Cell">
        <title>A tissue-specific atlas of mouse protein phosphorylation and expression.</title>
        <authorList>
            <person name="Huttlin E.L."/>
            <person name="Jedrychowski M.P."/>
            <person name="Elias J.E."/>
            <person name="Goswami T."/>
            <person name="Rad R."/>
            <person name="Beausoleil S.A."/>
            <person name="Villen J."/>
            <person name="Haas W."/>
            <person name="Sowa M.E."/>
            <person name="Gygi S.P."/>
        </authorList>
    </citation>
    <scope>PHOSPHORYLATION [LARGE SCALE ANALYSIS] AT SER-730; SER-744; SER-786; SER-954 AND THR-1025</scope>
    <scope>IDENTIFICATION BY MASS SPECTROMETRY [LARGE SCALE ANALYSIS]</scope>
    <source>
        <tissue>Brain</tissue>
        <tissue>Brown adipose tissue</tissue>
    </source>
</reference>
<reference key="9">
    <citation type="journal article" date="2010" name="Neuron">
        <title>The endocannabinoid 2-arachidonoylglycerol produced by diacylglycerol lipase alpha mediates retrograde suppression of synaptic transmission.</title>
        <authorList>
            <person name="Tanimura A."/>
            <person name="Yamazaki M."/>
            <person name="Hashimotodani Y."/>
            <person name="Uchigashima M."/>
            <person name="Kawata S."/>
            <person name="Abe M."/>
            <person name="Kita Y."/>
            <person name="Hashimoto K."/>
            <person name="Shimizu T."/>
            <person name="Watanabe M."/>
            <person name="Sakimura K."/>
            <person name="Kano M."/>
        </authorList>
    </citation>
    <scope>DISRUPTION PHENOTYPE</scope>
    <scope>TISSUE SPECIFICITY</scope>
    <scope>FUNCTION</scope>
</reference>
<reference key="10">
    <citation type="journal article" date="2010" name="J. Neurosci.">
        <title>Loss of retrograde endocannabinoid signaling and reduced adult neurogenesis in diacylglycerol lipase knock-out mice.</title>
        <authorList>
            <person name="Gao Y."/>
            <person name="Vasilyev D.V."/>
            <person name="Goncalves M.B."/>
            <person name="Howell F.V."/>
            <person name="Hobbs C."/>
            <person name="Reisenberg M."/>
            <person name="Shen R."/>
            <person name="Zhang M.Y."/>
            <person name="Strassle B.W."/>
            <person name="Lu P."/>
            <person name="Mark L."/>
            <person name="Piesla M.J."/>
            <person name="Deng K."/>
            <person name="Kouranova E.V."/>
            <person name="Ring R.H."/>
            <person name="Whiteside G.T."/>
            <person name="Bates B."/>
            <person name="Walsh F.S."/>
            <person name="Williams G."/>
            <person name="Pangalos M.N."/>
            <person name="Samad T.A."/>
            <person name="Doherty P."/>
        </authorList>
    </citation>
    <scope>DISRUPTION PHENOTYPE</scope>
    <scope>TISSUE SPECIFICITY</scope>
    <scope>FUNCTION</scope>
</reference>
<reference key="11">
    <citation type="journal article" date="2012" name="Nat. Chem. Biol.">
        <title>DAGLbeta inhibition perturbs a lipid network involved in macrophage inflammatory responses.</title>
        <authorList>
            <person name="Hsu K.L."/>
            <person name="Tsuboi K."/>
            <person name="Adibekian A."/>
            <person name="Pugh H."/>
            <person name="Masuda K."/>
            <person name="Cravatt B.F."/>
        </authorList>
    </citation>
    <scope>FUNCTION</scope>
    <scope>CATALYTIC ACTIVITY</scope>
    <scope>ACTIVITY REGULATION</scope>
</reference>
<reference key="12">
    <citation type="journal article" date="2013" name="Nat. Neurosci.">
        <title>CaMKII regulates diacylglycerol lipase-alpha and striatal endocannabinoid signaling.</title>
        <authorList>
            <person name="Shonesy B.C."/>
            <person name="Wang X."/>
            <person name="Rose K.L."/>
            <person name="Ramikie T.S."/>
            <person name="Cavener V.S."/>
            <person name="Rentz T."/>
            <person name="Baucum A.J. II"/>
            <person name="Jalan-Sakrikar N."/>
            <person name="Mackie K."/>
            <person name="Winder D.G."/>
            <person name="Patel S."/>
            <person name="Colbran R.J."/>
        </authorList>
    </citation>
    <scope>INTERACTION WITH CAMK2A</scope>
</reference>
<reference key="13">
    <citation type="journal article" date="2014" name="Cell Rep.">
        <title>Genetic disruption of 2-arachidonoylglycerol synthesis reveals a key role for endocannabinoid signaling in anxiety modulation.</title>
        <authorList>
            <person name="Shonesy B.C."/>
            <person name="Bluett R.J."/>
            <person name="Ramikie T.S."/>
            <person name="Baldi R."/>
            <person name="Hermanson D.J."/>
            <person name="Kingsley P.J."/>
            <person name="Marnett L.J."/>
            <person name="Winder D.G."/>
            <person name="Colbran R.J."/>
            <person name="Patel S."/>
        </authorList>
    </citation>
    <scope>DISRUPTION PHENOTYPE</scope>
    <scope>FUNCTION</scope>
</reference>
<reference key="14">
    <citation type="journal article" date="2016" name="Elife">
        <title>A chemical proteomic atlas of brain serine hydrolases identifies cell type-specific pathways regulating neuroinflammation.</title>
        <authorList>
            <person name="Viader A."/>
            <person name="Ogasawara D."/>
            <person name="Joslyn C.M."/>
            <person name="Sanchez-Alavez M."/>
            <person name="Mori S."/>
            <person name="Nguyen W."/>
            <person name="Conti B."/>
            <person name="Cravatt B.F."/>
        </authorList>
    </citation>
    <scope>DISRUPTION PHENOTYPE</scope>
    <scope>TISSUE SPECIFICITY</scope>
    <scope>FUNCTION</scope>
</reference>
<reference key="15">
    <citation type="journal article" date="2016" name="Proc. Natl. Acad. Sci. U.S.A.">
        <title>Rapid and profound rewiring of brain lipid signaling networks by acute diacylglycerol lipase inhibition.</title>
        <authorList>
            <person name="Ogasawara D."/>
            <person name="Deng H."/>
            <person name="Viader A."/>
            <person name="Baggelaar M.P."/>
            <person name="Breman A."/>
            <person name="den Dulk H."/>
            <person name="van den Nieuwendijk A.M."/>
            <person name="van den Nieuwendijk A.M."/>
            <person name="Soethoudt M."/>
            <person name="van der Wel T."/>
            <person name="Zhou J."/>
            <person name="Overkleeft H.S."/>
            <person name="Sanchez-Alavez M."/>
            <person name="Mori S."/>
            <person name="Mo S."/>
            <person name="Nguyen W."/>
            <person name="Conti B."/>
            <person name="Liu X."/>
            <person name="Chen Y."/>
            <person name="Liu Q.S."/>
            <person name="Cravatt B.F."/>
            <person name="van der Stelt M."/>
        </authorList>
    </citation>
    <scope>ACTIVITY REGULATION</scope>
    <scope>FUNCTION</scope>
    <scope>CATALYTIC ACTIVITY</scope>
</reference>
<organism>
    <name type="scientific">Mus musculus</name>
    <name type="common">Mouse</name>
    <dbReference type="NCBI Taxonomy" id="10090"/>
    <lineage>
        <taxon>Eukaryota</taxon>
        <taxon>Metazoa</taxon>
        <taxon>Chordata</taxon>
        <taxon>Craniata</taxon>
        <taxon>Vertebrata</taxon>
        <taxon>Euteleostomi</taxon>
        <taxon>Mammalia</taxon>
        <taxon>Eutheria</taxon>
        <taxon>Euarchontoglires</taxon>
        <taxon>Glires</taxon>
        <taxon>Rodentia</taxon>
        <taxon>Myomorpha</taxon>
        <taxon>Muroidea</taxon>
        <taxon>Muridae</taxon>
        <taxon>Murinae</taxon>
        <taxon>Mus</taxon>
        <taxon>Mus</taxon>
    </lineage>
</organism>
<protein>
    <recommendedName>
        <fullName evidence="17">Diacylglycerol lipase-alpha</fullName>
        <shortName evidence="17">DAGL-alpha</shortName>
        <shortName evidence="16">DGL-alpha</shortName>
        <ecNumber evidence="8 11">3.1.1.116</ecNumber>
    </recommendedName>
    <alternativeName>
        <fullName>Neural stem cell-derived dendrite regulator</fullName>
    </alternativeName>
    <alternativeName>
        <fullName>Sn1-specific diacylglycerol lipase alpha</fullName>
    </alternativeName>
</protein>
<evidence type="ECO:0000250" key="1">
    <source>
        <dbReference type="UniProtKB" id="Q5YLM1"/>
    </source>
</evidence>
<evidence type="ECO:0000250" key="2">
    <source>
        <dbReference type="UniProtKB" id="Q9Y4D2"/>
    </source>
</evidence>
<evidence type="ECO:0000255" key="3"/>
<evidence type="ECO:0000255" key="4">
    <source>
        <dbReference type="PROSITE-ProRule" id="PRU10037"/>
    </source>
</evidence>
<evidence type="ECO:0000256" key="5">
    <source>
        <dbReference type="SAM" id="MobiDB-lite"/>
    </source>
</evidence>
<evidence type="ECO:0000269" key="6">
    <source>
    </source>
</evidence>
<evidence type="ECO:0000269" key="7">
    <source>
    </source>
</evidence>
<evidence type="ECO:0000269" key="8">
    <source>
    </source>
</evidence>
<evidence type="ECO:0000269" key="9">
    <source>
    </source>
</evidence>
<evidence type="ECO:0000269" key="10">
    <source>
    </source>
</evidence>
<evidence type="ECO:0000269" key="11">
    <source>
    </source>
</evidence>
<evidence type="ECO:0000269" key="12">
    <source>
    </source>
</evidence>
<evidence type="ECO:0000269" key="13">
    <source>
    </source>
</evidence>
<evidence type="ECO:0000269" key="14">
    <source>
    </source>
</evidence>
<evidence type="ECO:0000269" key="15">
    <source>
    </source>
</evidence>
<evidence type="ECO:0000303" key="16">
    <source>
    </source>
</evidence>
<evidence type="ECO:0000303" key="17">
    <source>
    </source>
</evidence>
<evidence type="ECO:0000305" key="18"/>
<evidence type="ECO:0000305" key="19">
    <source>
    </source>
</evidence>
<evidence type="ECO:0007744" key="20">
    <source>
    </source>
</evidence>
<evidence type="ECO:0007744" key="21">
    <source>
    </source>
</evidence>
<proteinExistence type="evidence at protein level"/>
<name>DGLA_MOUSE</name>
<gene>
    <name type="primary">Dagla</name>
    <name type="synonym">Kiaa0659</name>
    <name type="synonym">Nsddr</name>
</gene>